<evidence type="ECO:0000250" key="1"/>
<evidence type="ECO:0000305" key="2"/>
<protein>
    <recommendedName>
        <fullName>Tryptophan synthase beta chain</fullName>
        <ecNumber>4.2.1.20</ecNumber>
    </recommendedName>
</protein>
<reference key="1">
    <citation type="journal article" date="1994" name="Plant Physiol.">
        <title>Synechocystis PCC 6803 contains a single gene for the beta subunit of tryptophan synthase with strong homology to the trpB genes of Arabidopsis and maize (Zea mays L.).</title>
        <authorList>
            <person name="Zhao G.P."/>
            <person name="Somerville R.L."/>
            <person name="Chitnis P.R."/>
        </authorList>
    </citation>
    <scope>NUCLEOTIDE SEQUENCE [GENOMIC DNA]</scope>
</reference>
<reference key="2">
    <citation type="journal article" date="1995" name="DNA Res.">
        <title>Sequence analysis of the genome of the unicellular cyanobacterium Synechocystis sp. strain PCC6803. I. Sequence features in the 1 Mb region from map positions 64% to 92% of the genome.</title>
        <authorList>
            <person name="Kaneko T."/>
            <person name="Tanaka A."/>
            <person name="Sato S."/>
            <person name="Kotani H."/>
            <person name="Sazuka T."/>
            <person name="Miyajima N."/>
            <person name="Sugiura M."/>
            <person name="Tabata S."/>
        </authorList>
    </citation>
    <scope>NUCLEOTIDE SEQUENCE [LARGE SCALE GENOMIC DNA]</scope>
    <source>
        <strain>ATCC 27184 / PCC 6803 / N-1</strain>
    </source>
</reference>
<reference key="3">
    <citation type="journal article" date="1996" name="DNA Res.">
        <title>Sequence analysis of the genome of the unicellular cyanobacterium Synechocystis sp. strain PCC6803. II. Sequence determination of the entire genome and assignment of potential protein-coding regions.</title>
        <authorList>
            <person name="Kaneko T."/>
            <person name="Sato S."/>
            <person name="Kotani H."/>
            <person name="Tanaka A."/>
            <person name="Asamizu E."/>
            <person name="Nakamura Y."/>
            <person name="Miyajima N."/>
            <person name="Hirosawa M."/>
            <person name="Sugiura M."/>
            <person name="Sasamoto S."/>
            <person name="Kimura T."/>
            <person name="Hosouchi T."/>
            <person name="Matsuno A."/>
            <person name="Muraki A."/>
            <person name="Nakazaki N."/>
            <person name="Naruo K."/>
            <person name="Okumura S."/>
            <person name="Shimpo S."/>
            <person name="Takeuchi C."/>
            <person name="Wada T."/>
            <person name="Watanabe A."/>
            <person name="Yamada M."/>
            <person name="Yasuda M."/>
            <person name="Tabata S."/>
        </authorList>
    </citation>
    <scope>NUCLEOTIDE SEQUENCE [LARGE SCALE GENOMIC DNA]</scope>
    <source>
        <strain>ATCC 27184 / PCC 6803 / Kazusa</strain>
    </source>
</reference>
<keyword id="KW-0028">Amino-acid biosynthesis</keyword>
<keyword id="KW-0057">Aromatic amino acid biosynthesis</keyword>
<keyword id="KW-0456">Lyase</keyword>
<keyword id="KW-0663">Pyridoxal phosphate</keyword>
<keyword id="KW-1185">Reference proteome</keyword>
<keyword id="KW-0822">Tryptophan biosynthesis</keyword>
<proteinExistence type="inferred from homology"/>
<sequence length="412" mass="45070">MNITSPLSAPSHQYPDALGRFGNYGGKYVPETLMPALTELEEAYYRYRAESSFQEELAGLLKDYVGRSSPLYFAERLSAHYARPDGTYPLIYLKREDLNHTGAHKINNALGQVLLAKRMGKKRIIAETGAGQHGVATATVCARFGLECIIYMGVQDMERQKLNVFRMNLLGARVQPVTAGTGTLKDATSEAIRDWVTNVETTHYILGSVAGPHPYPMMVRDFHRVIGQETRQQALKKWGGLPDILLACVGGGSNAMGLFYDFIDEPAVRLIGIEAAGESIVSGKHAATLTMGKPGVLHGAMSYLLQDKEGQVTEAHSISAGLDYPGVGPEHSYLKDAGRAEYYSVTDQEAITALQRLSQLEGIIPALETAHAFAYLETLCPQLKNGERIVINCSGRGDKDVQTVAKYLQMEI</sequence>
<comment type="function">
    <text evidence="1">The beta subunit is responsible for the synthesis of L-tryptophan from indole and L-serine.</text>
</comment>
<comment type="catalytic activity">
    <reaction>
        <text>(1S,2R)-1-C-(indol-3-yl)glycerol 3-phosphate + L-serine = D-glyceraldehyde 3-phosphate + L-tryptophan + H2O</text>
        <dbReference type="Rhea" id="RHEA:10532"/>
        <dbReference type="ChEBI" id="CHEBI:15377"/>
        <dbReference type="ChEBI" id="CHEBI:33384"/>
        <dbReference type="ChEBI" id="CHEBI:57912"/>
        <dbReference type="ChEBI" id="CHEBI:58866"/>
        <dbReference type="ChEBI" id="CHEBI:59776"/>
        <dbReference type="EC" id="4.2.1.20"/>
    </reaction>
</comment>
<comment type="cofactor">
    <cofactor evidence="1">
        <name>pyridoxal 5'-phosphate</name>
        <dbReference type="ChEBI" id="CHEBI:597326"/>
    </cofactor>
</comment>
<comment type="pathway">
    <text>Amino-acid biosynthesis; L-tryptophan biosynthesis; L-tryptophan from chorismate: step 5/5.</text>
</comment>
<comment type="subunit">
    <text evidence="1">Tetramer of two alpha and two beta chains.</text>
</comment>
<comment type="similarity">
    <text evidence="2">Belongs to the TrpB family.</text>
</comment>
<accession>Q59992</accession>
<organism>
    <name type="scientific">Synechocystis sp. (strain ATCC 27184 / PCC 6803 / Kazusa)</name>
    <dbReference type="NCBI Taxonomy" id="1111708"/>
    <lineage>
        <taxon>Bacteria</taxon>
        <taxon>Bacillati</taxon>
        <taxon>Cyanobacteriota</taxon>
        <taxon>Cyanophyceae</taxon>
        <taxon>Synechococcales</taxon>
        <taxon>Merismopediaceae</taxon>
        <taxon>Synechocystis</taxon>
    </lineage>
</organism>
<feature type="chain" id="PRO_0000099012" description="Tryptophan synthase beta chain">
    <location>
        <begin position="1"/>
        <end position="412"/>
    </location>
</feature>
<feature type="modified residue" description="N6-(pyridoxal phosphate)lysine" evidence="1">
    <location>
        <position position="105"/>
    </location>
</feature>
<gene>
    <name type="primary">trpB</name>
    <name type="ordered locus">slr0543</name>
</gene>
<name>TRPB_SYNY3</name>
<dbReference type="EC" id="4.2.1.20"/>
<dbReference type="EMBL" id="L14596">
    <property type="protein sequence ID" value="AAA27302.1"/>
    <property type="molecule type" value="Genomic_DNA"/>
</dbReference>
<dbReference type="EMBL" id="BA000022">
    <property type="protein sequence ID" value="BAA10837.1"/>
    <property type="molecule type" value="Genomic_DNA"/>
</dbReference>
<dbReference type="PIR" id="S75990">
    <property type="entry name" value="S75990"/>
</dbReference>
<dbReference type="SMR" id="Q59992"/>
<dbReference type="FunCoup" id="Q59992">
    <property type="interactions" value="444"/>
</dbReference>
<dbReference type="IntAct" id="Q59992">
    <property type="interactions" value="4"/>
</dbReference>
<dbReference type="STRING" id="1148.gene:10500341"/>
<dbReference type="PaxDb" id="1148-1001350"/>
<dbReference type="EnsemblBacteria" id="BAA10837">
    <property type="protein sequence ID" value="BAA10837"/>
    <property type="gene ID" value="BAA10837"/>
</dbReference>
<dbReference type="KEGG" id="syn:slr0543"/>
<dbReference type="eggNOG" id="COG0133">
    <property type="taxonomic scope" value="Bacteria"/>
</dbReference>
<dbReference type="InParanoid" id="Q59992"/>
<dbReference type="PhylomeDB" id="Q59992"/>
<dbReference type="UniPathway" id="UPA00035">
    <property type="reaction ID" value="UER00044"/>
</dbReference>
<dbReference type="Proteomes" id="UP000001425">
    <property type="component" value="Chromosome"/>
</dbReference>
<dbReference type="GO" id="GO:0005737">
    <property type="term" value="C:cytoplasm"/>
    <property type="evidence" value="ECO:0000318"/>
    <property type="project" value="GO_Central"/>
</dbReference>
<dbReference type="GO" id="GO:0004834">
    <property type="term" value="F:tryptophan synthase activity"/>
    <property type="evidence" value="ECO:0007669"/>
    <property type="project" value="UniProtKB-UniRule"/>
</dbReference>
<dbReference type="GO" id="GO:0000162">
    <property type="term" value="P:L-tryptophan biosynthetic process"/>
    <property type="evidence" value="ECO:0000318"/>
    <property type="project" value="GO_Central"/>
</dbReference>
<dbReference type="CDD" id="cd06446">
    <property type="entry name" value="Trp-synth_B"/>
    <property type="match status" value="1"/>
</dbReference>
<dbReference type="FunFam" id="3.40.50.1100:FF:000001">
    <property type="entry name" value="Tryptophan synthase beta chain"/>
    <property type="match status" value="1"/>
</dbReference>
<dbReference type="FunFam" id="3.40.50.1100:FF:000004">
    <property type="entry name" value="Tryptophan synthase beta chain"/>
    <property type="match status" value="1"/>
</dbReference>
<dbReference type="Gene3D" id="3.40.50.1100">
    <property type="match status" value="2"/>
</dbReference>
<dbReference type="HAMAP" id="MF_00133">
    <property type="entry name" value="Trp_synth_beta"/>
    <property type="match status" value="1"/>
</dbReference>
<dbReference type="InterPro" id="IPR006653">
    <property type="entry name" value="Trp_synth_b_CS"/>
</dbReference>
<dbReference type="InterPro" id="IPR006654">
    <property type="entry name" value="Trp_synth_beta"/>
</dbReference>
<dbReference type="InterPro" id="IPR023026">
    <property type="entry name" value="Trp_synth_beta/beta-like"/>
</dbReference>
<dbReference type="InterPro" id="IPR001926">
    <property type="entry name" value="TrpB-like_PALP"/>
</dbReference>
<dbReference type="InterPro" id="IPR036052">
    <property type="entry name" value="TrpB-like_PALP_sf"/>
</dbReference>
<dbReference type="NCBIfam" id="TIGR00263">
    <property type="entry name" value="trpB"/>
    <property type="match status" value="1"/>
</dbReference>
<dbReference type="PANTHER" id="PTHR48077:SF3">
    <property type="entry name" value="TRYPTOPHAN SYNTHASE"/>
    <property type="match status" value="1"/>
</dbReference>
<dbReference type="PANTHER" id="PTHR48077">
    <property type="entry name" value="TRYPTOPHAN SYNTHASE-RELATED"/>
    <property type="match status" value="1"/>
</dbReference>
<dbReference type="Pfam" id="PF00291">
    <property type="entry name" value="PALP"/>
    <property type="match status" value="1"/>
</dbReference>
<dbReference type="PIRSF" id="PIRSF001413">
    <property type="entry name" value="Trp_syn_beta"/>
    <property type="match status" value="1"/>
</dbReference>
<dbReference type="SUPFAM" id="SSF53686">
    <property type="entry name" value="Tryptophan synthase beta subunit-like PLP-dependent enzymes"/>
    <property type="match status" value="1"/>
</dbReference>
<dbReference type="PROSITE" id="PS00168">
    <property type="entry name" value="TRP_SYNTHASE_BETA"/>
    <property type="match status" value="1"/>
</dbReference>